<protein>
    <recommendedName>
        <fullName evidence="1">NAD(P)H-quinone oxidoreductase subunit 2 A, chloroplastic</fullName>
        <ecNumber evidence="1">7.1.1.-</ecNumber>
    </recommendedName>
    <alternativeName>
        <fullName evidence="1">NAD(P)H dehydrogenase, subunit 2 A</fullName>
    </alternativeName>
    <alternativeName>
        <fullName evidence="1">NADH-plastoquinone oxidoreductase subunit 2 A</fullName>
    </alternativeName>
</protein>
<organism>
    <name type="scientific">Coffea arabica</name>
    <name type="common">Arabian coffee</name>
    <dbReference type="NCBI Taxonomy" id="13443"/>
    <lineage>
        <taxon>Eukaryota</taxon>
        <taxon>Viridiplantae</taxon>
        <taxon>Streptophyta</taxon>
        <taxon>Embryophyta</taxon>
        <taxon>Tracheophyta</taxon>
        <taxon>Spermatophyta</taxon>
        <taxon>Magnoliopsida</taxon>
        <taxon>eudicotyledons</taxon>
        <taxon>Gunneridae</taxon>
        <taxon>Pentapetalae</taxon>
        <taxon>asterids</taxon>
        <taxon>lamiids</taxon>
        <taxon>Gentianales</taxon>
        <taxon>Rubiaceae</taxon>
        <taxon>Ixoroideae</taxon>
        <taxon>Gardenieae complex</taxon>
        <taxon>Bertiereae - Coffeeae clade</taxon>
        <taxon>Coffeeae</taxon>
        <taxon>Coffea</taxon>
    </lineage>
</organism>
<keyword id="KW-0150">Chloroplast</keyword>
<keyword id="KW-0472">Membrane</keyword>
<keyword id="KW-0520">NAD</keyword>
<keyword id="KW-0521">NADP</keyword>
<keyword id="KW-0934">Plastid</keyword>
<keyword id="KW-0618">Plastoquinone</keyword>
<keyword id="KW-0874">Quinone</keyword>
<keyword id="KW-1185">Reference proteome</keyword>
<keyword id="KW-0793">Thylakoid</keyword>
<keyword id="KW-1278">Translocase</keyword>
<keyword id="KW-0812">Transmembrane</keyword>
<keyword id="KW-1133">Transmembrane helix</keyword>
<keyword id="KW-0813">Transport</keyword>
<accession>P0CC48</accession>
<accession>A0A380</accession>
<accession>A0A395</accession>
<geneLocation type="chloroplast"/>
<gene>
    <name evidence="1" type="primary">ndhB1</name>
</gene>
<reference key="1">
    <citation type="journal article" date="2007" name="Plant Biotechnol. J.">
        <title>The complete nucleotide sequence of the coffee (Coffea arabica L.) chloroplast genome: organization and implications for biotechnology and phylogenetic relationships amongst angiosperms.</title>
        <authorList>
            <person name="Samson N."/>
            <person name="Bausher M.G."/>
            <person name="Lee S.-B."/>
            <person name="Jansen R.K."/>
            <person name="Daniell H."/>
        </authorList>
    </citation>
    <scope>NUCLEOTIDE SEQUENCE [LARGE SCALE GENOMIC DNA]</scope>
</reference>
<comment type="function">
    <text evidence="1">NDH shuttles electrons from NAD(P)H:plastoquinone, via FMN and iron-sulfur (Fe-S) centers, to quinones in the photosynthetic chain and possibly in a chloroplast respiratory chain. The immediate electron acceptor for the enzyme in this species is believed to be plastoquinone. Couples the redox reaction to proton translocation, and thus conserves the redox energy in a proton gradient.</text>
</comment>
<comment type="catalytic activity">
    <reaction evidence="1">
        <text>a plastoquinone + NADH + (n+1) H(+)(in) = a plastoquinol + NAD(+) + n H(+)(out)</text>
        <dbReference type="Rhea" id="RHEA:42608"/>
        <dbReference type="Rhea" id="RHEA-COMP:9561"/>
        <dbReference type="Rhea" id="RHEA-COMP:9562"/>
        <dbReference type="ChEBI" id="CHEBI:15378"/>
        <dbReference type="ChEBI" id="CHEBI:17757"/>
        <dbReference type="ChEBI" id="CHEBI:57540"/>
        <dbReference type="ChEBI" id="CHEBI:57945"/>
        <dbReference type="ChEBI" id="CHEBI:62192"/>
    </reaction>
</comment>
<comment type="catalytic activity">
    <reaction evidence="1">
        <text>a plastoquinone + NADPH + (n+1) H(+)(in) = a plastoquinol + NADP(+) + n H(+)(out)</text>
        <dbReference type="Rhea" id="RHEA:42612"/>
        <dbReference type="Rhea" id="RHEA-COMP:9561"/>
        <dbReference type="Rhea" id="RHEA-COMP:9562"/>
        <dbReference type="ChEBI" id="CHEBI:15378"/>
        <dbReference type="ChEBI" id="CHEBI:17757"/>
        <dbReference type="ChEBI" id="CHEBI:57783"/>
        <dbReference type="ChEBI" id="CHEBI:58349"/>
        <dbReference type="ChEBI" id="CHEBI:62192"/>
    </reaction>
</comment>
<comment type="subunit">
    <text evidence="1">NDH is composed of at least 16 different subunits, 5 of which are encoded in the nucleus.</text>
</comment>
<comment type="subcellular location">
    <subcellularLocation>
        <location evidence="1">Plastid</location>
        <location evidence="1">Chloroplast thylakoid membrane</location>
        <topology evidence="1">Multi-pass membrane protein</topology>
    </subcellularLocation>
</comment>
<comment type="similarity">
    <text evidence="1">Belongs to the complex I subunit 2 family.</text>
</comment>
<name>NU2C1_COFAR</name>
<sequence>MIWHVQNENFILDSTRIFMKAFHLLLFDGSLIFPECILIFGLILLLMIDSSSDQKDIPWLYFIPSTSLVMSITALLFRWREEPMISFSGNFQTNNFNEIFQFLILLCSTLCIPLSVEYIECTEMAITEFLLFVLTATLGGMFLCGANDFITIFVAPECFSLCSYLLSGYTKKDVRSNEATMKYLLMGGASSSILVHGFSWLYGSSGGEIELQEIVNGLINTQMYNSPGISIALIFITVGIGFKLSPAPSHQWTPDVYEGVRFVREIPTSLSISEMFGFFKTPWTCRREILSPTPVVAFLSVTSKVAASASATRIFDIPFYFSSNGWHLLLEILAILSMILGNLIAITQTSMKRMLAYSSIGQIGYVIIGIIVGDSNDGYASMITYMLFYISMNLGTFACIVLFGLRTGTDNIRDYAGLYTKDPFLALSLALCLLSLGGLPPLAGFFGKLYLFWCGWQAGLYFLVLIGLLTSVVSIYYYLKIIKLLMTGRNQEITPHVRNYRRSPLRSNNSIELSMIVCVIASTIPGISMNPIIAIAQDSLF</sequence>
<dbReference type="EC" id="7.1.1.-" evidence="1"/>
<dbReference type="EMBL" id="EF044213">
    <property type="protein sequence ID" value="ABJ89723.1"/>
    <property type="molecule type" value="Genomic_DNA"/>
</dbReference>
<dbReference type="SMR" id="P0CC48"/>
<dbReference type="OrthoDB" id="1621789at2759"/>
<dbReference type="Proteomes" id="UP000515148">
    <property type="component" value="Unplaced"/>
</dbReference>
<dbReference type="GO" id="GO:0009535">
    <property type="term" value="C:chloroplast thylakoid membrane"/>
    <property type="evidence" value="ECO:0007669"/>
    <property type="project" value="UniProtKB-SubCell"/>
</dbReference>
<dbReference type="GO" id="GO:0008137">
    <property type="term" value="F:NADH dehydrogenase (ubiquinone) activity"/>
    <property type="evidence" value="ECO:0007669"/>
    <property type="project" value="InterPro"/>
</dbReference>
<dbReference type="GO" id="GO:0048038">
    <property type="term" value="F:quinone binding"/>
    <property type="evidence" value="ECO:0007669"/>
    <property type="project" value="UniProtKB-KW"/>
</dbReference>
<dbReference type="GO" id="GO:0042773">
    <property type="term" value="P:ATP synthesis coupled electron transport"/>
    <property type="evidence" value="ECO:0007669"/>
    <property type="project" value="InterPro"/>
</dbReference>
<dbReference type="GO" id="GO:0019684">
    <property type="term" value="P:photosynthesis, light reaction"/>
    <property type="evidence" value="ECO:0007669"/>
    <property type="project" value="UniProtKB-UniRule"/>
</dbReference>
<dbReference type="HAMAP" id="MF_00445">
    <property type="entry name" value="NDH1_NuoN_1"/>
    <property type="match status" value="1"/>
</dbReference>
<dbReference type="InterPro" id="IPR010096">
    <property type="entry name" value="NADH-Q_OxRdtase_suN/2"/>
</dbReference>
<dbReference type="InterPro" id="IPR001750">
    <property type="entry name" value="ND/Mrp_TM"/>
</dbReference>
<dbReference type="InterPro" id="IPR045693">
    <property type="entry name" value="Ndh2_N"/>
</dbReference>
<dbReference type="PANTHER" id="PTHR22773">
    <property type="entry name" value="NADH DEHYDROGENASE"/>
    <property type="match status" value="1"/>
</dbReference>
<dbReference type="Pfam" id="PF19530">
    <property type="entry name" value="Ndh2_N"/>
    <property type="match status" value="1"/>
</dbReference>
<dbReference type="Pfam" id="PF00361">
    <property type="entry name" value="Proton_antipo_M"/>
    <property type="match status" value="2"/>
</dbReference>
<evidence type="ECO:0000255" key="1">
    <source>
        <dbReference type="HAMAP-Rule" id="MF_00445"/>
    </source>
</evidence>
<feature type="chain" id="PRO_0000275593" description="NAD(P)H-quinone oxidoreductase subunit 2 A, chloroplastic">
    <location>
        <begin position="1"/>
        <end position="541"/>
    </location>
</feature>
<feature type="transmembrane region" description="Helical" evidence="1">
    <location>
        <begin position="24"/>
        <end position="44"/>
    </location>
</feature>
<feature type="transmembrane region" description="Helical" evidence="1">
    <location>
        <begin position="57"/>
        <end position="77"/>
    </location>
</feature>
<feature type="transmembrane region" description="Helical" evidence="1">
    <location>
        <begin position="99"/>
        <end position="119"/>
    </location>
</feature>
<feature type="transmembrane region" description="Helical" evidence="1">
    <location>
        <begin position="124"/>
        <end position="144"/>
    </location>
</feature>
<feature type="transmembrane region" description="Helical" evidence="1">
    <location>
        <begin position="149"/>
        <end position="169"/>
    </location>
</feature>
<feature type="transmembrane region" description="Helical" evidence="1">
    <location>
        <begin position="183"/>
        <end position="203"/>
    </location>
</feature>
<feature type="transmembrane region" description="Helical" evidence="1">
    <location>
        <begin position="227"/>
        <end position="247"/>
    </location>
</feature>
<feature type="transmembrane region" description="Helical" evidence="1">
    <location>
        <begin position="289"/>
        <end position="309"/>
    </location>
</feature>
<feature type="transmembrane region" description="Helical" evidence="1">
    <location>
        <begin position="326"/>
        <end position="346"/>
    </location>
</feature>
<feature type="transmembrane region" description="Helical" evidence="1">
    <location>
        <begin position="354"/>
        <end position="374"/>
    </location>
</feature>
<feature type="transmembrane region" description="Helical" evidence="1">
    <location>
        <begin position="385"/>
        <end position="405"/>
    </location>
</feature>
<feature type="transmembrane region" description="Helical" evidence="1">
    <location>
        <begin position="426"/>
        <end position="446"/>
    </location>
</feature>
<feature type="transmembrane region" description="Helical" evidence="1">
    <location>
        <begin position="449"/>
        <end position="469"/>
    </location>
</feature>
<feature type="transmembrane region" description="Helical" evidence="1">
    <location>
        <begin position="515"/>
        <end position="535"/>
    </location>
</feature>
<proteinExistence type="inferred from homology"/>